<name>AVLB2_WHEAT</name>
<sequence length="285" mass="32513">MKVFILALLALTATTAIAQLETTCSQGFGQSQQQQQPGQRQLLEQMKPCVAFLQQKCSPLRMPFLQTQVEQLSSCQIVQYQCCQQLAQIPERTRCHAIHIVVEAIIQQQSQQQWQEPQQQAQHKSMRMLLENLSLMCNIYVPVQCQQQQQMGQQPQQQQLQEQLTPCATFLQHQCSPVTVPFPQIPVDQPTSCQNVQHQCCRQLSQIPEQFRCQAIHNVAEAIRQQQPQQQWQGMYQPQQPAQHESIRMSLQALRSMCNIYIPVQCPAPTAYNIPMVATCTSGAC</sequence>
<keyword id="KW-1015">Disulfide bond</keyword>
<keyword id="KW-1185">Reference proteome</keyword>
<keyword id="KW-0708">Seed storage protein</keyword>
<keyword id="KW-0732">Signal</keyword>
<keyword id="KW-0758">Storage protein</keyword>
<reference key="1">
    <citation type="journal article" date="2006" name="J. Cereal Sci.">
        <title>Transcriptome analysis reveals differentially expressed storage protein transcripts in seeds of Aegilops and wheat.</title>
        <authorList>
            <person name="Kan Y."/>
            <person name="Wan Y."/>
            <person name="Beaudoin F."/>
            <person name="Leader D.J."/>
            <person name="Edwards K."/>
            <person name="Poole R."/>
            <person name="Wang D."/>
            <person name="Mitchell R.A.C."/>
            <person name="Shewry P.R."/>
        </authorList>
    </citation>
    <scope>NUCLEOTIDE SEQUENCE [MRNA]</scope>
    <source>
        <strain>cv. Cadenza</strain>
    </source>
</reference>
<organism>
    <name type="scientific">Triticum aestivum</name>
    <name type="common">Wheat</name>
    <dbReference type="NCBI Taxonomy" id="4565"/>
    <lineage>
        <taxon>Eukaryota</taxon>
        <taxon>Viridiplantae</taxon>
        <taxon>Streptophyta</taxon>
        <taxon>Embryophyta</taxon>
        <taxon>Tracheophyta</taxon>
        <taxon>Spermatophyta</taxon>
        <taxon>Magnoliopsida</taxon>
        <taxon>Liliopsida</taxon>
        <taxon>Poales</taxon>
        <taxon>Poaceae</taxon>
        <taxon>BOP clade</taxon>
        <taxon>Pooideae</taxon>
        <taxon>Triticodae</taxon>
        <taxon>Triticeae</taxon>
        <taxon>Triticinae</taxon>
        <taxon>Triticum</taxon>
    </lineage>
</organism>
<protein>
    <recommendedName>
        <fullName>Avenin-like b2</fullName>
    </recommendedName>
</protein>
<proteinExistence type="evidence at transcript level"/>
<evidence type="ECO:0000250" key="1"/>
<evidence type="ECO:0000255" key="2"/>
<evidence type="ECO:0000305" key="3"/>
<comment type="function">
    <text evidence="1">Seed storage protein. Might be integrated via inter-chain disulfide bonds within the glutenin polymer (By similarity).</text>
</comment>
<comment type="PTM">
    <text evidence="3">Contains disulfide bonds.</text>
</comment>
<comment type="similarity">
    <text evidence="3">Belongs to the prolamin family.</text>
</comment>
<feature type="signal peptide" evidence="2">
    <location>
        <begin position="1"/>
        <end position="18"/>
    </location>
</feature>
<feature type="chain" id="PRO_0000410683" description="Avenin-like b2">
    <location>
        <begin position="19"/>
        <end position="285"/>
    </location>
</feature>
<dbReference type="SMR" id="P0CZ05"/>
<dbReference type="STRING" id="4565.P0CZ05"/>
<dbReference type="Proteomes" id="UP000019116">
    <property type="component" value="Unplaced"/>
</dbReference>
<dbReference type="ExpressionAtlas" id="P0CZ05">
    <property type="expression patterns" value="baseline and differential"/>
</dbReference>
<dbReference type="GO" id="GO:0045735">
    <property type="term" value="F:nutrient reservoir activity"/>
    <property type="evidence" value="ECO:0007669"/>
    <property type="project" value="UniProtKB-KW"/>
</dbReference>
<dbReference type="CDD" id="cd00261">
    <property type="entry name" value="AAI_SS"/>
    <property type="match status" value="2"/>
</dbReference>
<dbReference type="Gene3D" id="1.10.110.10">
    <property type="entry name" value="Plant lipid-transfer and hydrophobic proteins"/>
    <property type="match status" value="2"/>
</dbReference>
<dbReference type="InterPro" id="IPR036312">
    <property type="entry name" value="Bifun_inhib/LTP/seed_sf"/>
</dbReference>
<dbReference type="InterPro" id="IPR016140">
    <property type="entry name" value="Bifunc_inhib/LTP/seed_store"/>
</dbReference>
<dbReference type="InterPro" id="IPR001954">
    <property type="entry name" value="Glia_glutenin"/>
</dbReference>
<dbReference type="PANTHER" id="PTHR33454:SF11">
    <property type="entry name" value="AVENIN-LIKE B5"/>
    <property type="match status" value="1"/>
</dbReference>
<dbReference type="PANTHER" id="PTHR33454">
    <property type="entry name" value="PROLAMIN PPROL 14P"/>
    <property type="match status" value="1"/>
</dbReference>
<dbReference type="Pfam" id="PF13016">
    <property type="entry name" value="Gliadin"/>
    <property type="match status" value="2"/>
</dbReference>
<dbReference type="PRINTS" id="PR00208">
    <property type="entry name" value="GLIADGLUTEN"/>
</dbReference>
<dbReference type="PRINTS" id="PR00209">
    <property type="entry name" value="GLIADIN"/>
</dbReference>
<dbReference type="SMART" id="SM00499">
    <property type="entry name" value="AAI"/>
    <property type="match status" value="2"/>
</dbReference>
<dbReference type="SUPFAM" id="SSF47699">
    <property type="entry name" value="Bifunctional inhibitor/lipid-transfer protein/seed storage 2S albumin"/>
    <property type="match status" value="2"/>
</dbReference>
<accession>P0CZ05</accession>